<geneLocation type="mitochondrion"/>
<gene>
    <name type="primary">MT-ND4</name>
    <name type="synonym">MTND4</name>
    <name type="synonym">NADH4</name>
    <name type="synonym">ND4</name>
</gene>
<sequence>MLKLIIPSIMLIPMTFLINKKSLLWTATTFFSFLIAALSTLTLNMDVAEHNSTNPLLSIDQFSCPLIMLSCWLLPLTIMGSQAHMKTEPITRQKTMISLLILLQVLLCITFGASNLLMFYIAFETTLIPTLLIITRWGNQKERLTAGLYFLFYTLSASLPLLLALIMIQTHLNSLSIYIIPLSNLTLLLNTPWSETLWWIACFLAFLIKMPLYIFHLWLPKAHVEAPIAGSMILAAILLKLGGYGMIRMSSLFIPLTKDLAVPFMIIAMWGMIVTSSICLRQTDLKSMIAYSSVSHMGLVVAGIFTMTPWAWSGALAMMIAHGLVSSGLLCLANITYERTHTRSIFMNRGLKTLFPLMSFWWLMMTFANMALPPFPNFMAEILIITSLFNWSNWTILLLGLSMTLTALFSLNMLIMTQHEHPNKHAPVNPSTTREHLLMLMHMAPIILLIANPSAIMI</sequence>
<reference key="1">
    <citation type="journal article" date="1995" name="Genetics">
        <title>Complete sequence of a sea lamprey (Petromyzon marinus) mitochondrial genome: early establishment of the vertebrate genome organization.</title>
        <authorList>
            <person name="Lee W.J."/>
            <person name="Kocher T.D."/>
        </authorList>
    </citation>
    <scope>NUCLEOTIDE SEQUENCE [GENOMIC DNA]</scope>
</reference>
<protein>
    <recommendedName>
        <fullName>NADH-ubiquinone oxidoreductase chain 4</fullName>
        <ecNumber>7.1.1.2</ecNumber>
    </recommendedName>
    <alternativeName>
        <fullName>NADH dehydrogenase subunit 4</fullName>
    </alternativeName>
</protein>
<name>NU4M_PETMA</name>
<comment type="function">
    <text evidence="1">Core subunit of the mitochondrial membrane respiratory chain NADH dehydrogenase (Complex I) that is believed to belong to the minimal assembly required for catalysis. Complex I functions in the transfer of electrons from NADH to the respiratory chain. The immediate electron acceptor for the enzyme is believed to be ubiquinone (By similarity).</text>
</comment>
<comment type="catalytic activity">
    <reaction>
        <text>a ubiquinone + NADH + 5 H(+)(in) = a ubiquinol + NAD(+) + 4 H(+)(out)</text>
        <dbReference type="Rhea" id="RHEA:29091"/>
        <dbReference type="Rhea" id="RHEA-COMP:9565"/>
        <dbReference type="Rhea" id="RHEA-COMP:9566"/>
        <dbReference type="ChEBI" id="CHEBI:15378"/>
        <dbReference type="ChEBI" id="CHEBI:16389"/>
        <dbReference type="ChEBI" id="CHEBI:17976"/>
        <dbReference type="ChEBI" id="CHEBI:57540"/>
        <dbReference type="ChEBI" id="CHEBI:57945"/>
        <dbReference type="EC" id="7.1.1.2"/>
    </reaction>
</comment>
<comment type="subcellular location">
    <subcellularLocation>
        <location evidence="1">Mitochondrion membrane</location>
        <topology evidence="1">Multi-pass membrane protein</topology>
    </subcellularLocation>
</comment>
<comment type="similarity">
    <text evidence="3">Belongs to the complex I subunit 4 family.</text>
</comment>
<evidence type="ECO:0000250" key="1"/>
<evidence type="ECO:0000255" key="2"/>
<evidence type="ECO:0000305" key="3"/>
<dbReference type="EC" id="7.1.1.2"/>
<dbReference type="EMBL" id="U11880">
    <property type="protein sequence ID" value="AAB08747.1"/>
    <property type="molecule type" value="Genomic_DNA"/>
</dbReference>
<dbReference type="PIR" id="S55013">
    <property type="entry name" value="S55013"/>
</dbReference>
<dbReference type="RefSeq" id="NP_008157.1">
    <property type="nucleotide sequence ID" value="NC_001626.1"/>
</dbReference>
<dbReference type="SMR" id="Q35542"/>
<dbReference type="STRING" id="7757.ENSPMAP00000011440"/>
<dbReference type="Ensembl" id="ENSPMAT00000014134.1">
    <property type="protein sequence ID" value="ENSPMAP00000011440.1"/>
    <property type="gene ID" value="ENSPMAG00000013107.1"/>
</dbReference>
<dbReference type="GeneID" id="807809"/>
<dbReference type="KEGG" id="pmrn:807809"/>
<dbReference type="CTD" id="4538"/>
<dbReference type="GeneTree" id="ENSGT00730000111316"/>
<dbReference type="HOGENOM" id="CLU_007100_4_0_1"/>
<dbReference type="OMA" id="ITRWGNQ"/>
<dbReference type="OrthoDB" id="564260at2759"/>
<dbReference type="Proteomes" id="UP001318040">
    <property type="component" value="Mitochondrion MT"/>
</dbReference>
<dbReference type="GO" id="GO:0031966">
    <property type="term" value="C:mitochondrial membrane"/>
    <property type="evidence" value="ECO:0007669"/>
    <property type="project" value="UniProtKB-SubCell"/>
</dbReference>
<dbReference type="GO" id="GO:0008137">
    <property type="term" value="F:NADH dehydrogenase (ubiquinone) activity"/>
    <property type="evidence" value="ECO:0007669"/>
    <property type="project" value="UniProtKB-EC"/>
</dbReference>
<dbReference type="GO" id="GO:0048039">
    <property type="term" value="F:ubiquinone binding"/>
    <property type="evidence" value="ECO:0007669"/>
    <property type="project" value="TreeGrafter"/>
</dbReference>
<dbReference type="GO" id="GO:0042773">
    <property type="term" value="P:ATP synthesis coupled electron transport"/>
    <property type="evidence" value="ECO:0007669"/>
    <property type="project" value="InterPro"/>
</dbReference>
<dbReference type="GO" id="GO:0015990">
    <property type="term" value="P:electron transport coupled proton transport"/>
    <property type="evidence" value="ECO:0007669"/>
    <property type="project" value="TreeGrafter"/>
</dbReference>
<dbReference type="InterPro" id="IPR000260">
    <property type="entry name" value="NADH4_N"/>
</dbReference>
<dbReference type="InterPro" id="IPR010227">
    <property type="entry name" value="NADH_Q_OxRdtase_chainM/4"/>
</dbReference>
<dbReference type="InterPro" id="IPR003918">
    <property type="entry name" value="NADH_UbQ_OxRdtase"/>
</dbReference>
<dbReference type="InterPro" id="IPR001750">
    <property type="entry name" value="ND/Mrp_TM"/>
</dbReference>
<dbReference type="NCBIfam" id="TIGR01972">
    <property type="entry name" value="NDH_I_M"/>
    <property type="match status" value="1"/>
</dbReference>
<dbReference type="PANTHER" id="PTHR43507">
    <property type="entry name" value="NADH-UBIQUINONE OXIDOREDUCTASE CHAIN 4"/>
    <property type="match status" value="1"/>
</dbReference>
<dbReference type="PANTHER" id="PTHR43507:SF20">
    <property type="entry name" value="NADH-UBIQUINONE OXIDOREDUCTASE CHAIN 4"/>
    <property type="match status" value="1"/>
</dbReference>
<dbReference type="Pfam" id="PF01059">
    <property type="entry name" value="Oxidored_q5_N"/>
    <property type="match status" value="1"/>
</dbReference>
<dbReference type="Pfam" id="PF00361">
    <property type="entry name" value="Proton_antipo_M"/>
    <property type="match status" value="1"/>
</dbReference>
<dbReference type="PRINTS" id="PR01437">
    <property type="entry name" value="NUOXDRDTASE4"/>
</dbReference>
<feature type="chain" id="PRO_0000117967" description="NADH-ubiquinone oxidoreductase chain 4">
    <location>
        <begin position="1"/>
        <end position="458"/>
    </location>
</feature>
<feature type="transmembrane region" description="Helical" evidence="2">
    <location>
        <begin position="23"/>
        <end position="43"/>
    </location>
</feature>
<feature type="transmembrane region" description="Helical" evidence="2">
    <location>
        <begin position="59"/>
        <end position="79"/>
    </location>
</feature>
<feature type="transmembrane region" description="Helical" evidence="2">
    <location>
        <begin position="99"/>
        <end position="119"/>
    </location>
</feature>
<feature type="transmembrane region" description="Helical" evidence="2">
    <location>
        <begin position="148"/>
        <end position="168"/>
    </location>
</feature>
<feature type="transmembrane region" description="Helical" evidence="2">
    <location>
        <begin position="174"/>
        <end position="194"/>
    </location>
</feature>
<feature type="transmembrane region" description="Helical" evidence="2">
    <location>
        <begin position="197"/>
        <end position="217"/>
    </location>
</feature>
<feature type="transmembrane region" description="Helical" evidence="2">
    <location>
        <begin position="227"/>
        <end position="247"/>
    </location>
</feature>
<feature type="transmembrane region" description="Helical" evidence="2">
    <location>
        <begin position="260"/>
        <end position="280"/>
    </location>
</feature>
<feature type="transmembrane region" description="Helical" evidence="2">
    <location>
        <begin position="289"/>
        <end position="311"/>
    </location>
</feature>
<feature type="transmembrane region" description="Helical" evidence="2">
    <location>
        <begin position="315"/>
        <end position="337"/>
    </location>
</feature>
<feature type="transmembrane region" description="Helical" evidence="2">
    <location>
        <begin position="355"/>
        <end position="375"/>
    </location>
</feature>
<feature type="transmembrane region" description="Helical" evidence="2">
    <location>
        <begin position="396"/>
        <end position="416"/>
    </location>
</feature>
<feature type="transmembrane region" description="Helical" evidence="2">
    <location>
        <begin position="438"/>
        <end position="458"/>
    </location>
</feature>
<proteinExistence type="inferred from homology"/>
<keyword id="KW-0249">Electron transport</keyword>
<keyword id="KW-0472">Membrane</keyword>
<keyword id="KW-0496">Mitochondrion</keyword>
<keyword id="KW-0520">NAD</keyword>
<keyword id="KW-0679">Respiratory chain</keyword>
<keyword id="KW-1278">Translocase</keyword>
<keyword id="KW-0812">Transmembrane</keyword>
<keyword id="KW-1133">Transmembrane helix</keyword>
<keyword id="KW-0813">Transport</keyword>
<keyword id="KW-0830">Ubiquinone</keyword>
<accession>Q35542</accession>
<organism>
    <name type="scientific">Petromyzon marinus</name>
    <name type="common">Sea lamprey</name>
    <dbReference type="NCBI Taxonomy" id="7757"/>
    <lineage>
        <taxon>Eukaryota</taxon>
        <taxon>Metazoa</taxon>
        <taxon>Chordata</taxon>
        <taxon>Craniata</taxon>
        <taxon>Vertebrata</taxon>
        <taxon>Cyclostomata</taxon>
        <taxon>Hyperoartia</taxon>
        <taxon>Petromyzontiformes</taxon>
        <taxon>Petromyzontidae</taxon>
        <taxon>Petromyzon</taxon>
    </lineage>
</organism>